<organismHost>
    <name type="scientific">Escherichia coli</name>
    <dbReference type="NCBI Taxonomy" id="562"/>
</organismHost>
<name>VGE_BPAL3</name>
<feature type="chain" id="PRO_0000164882" description="Lysis protein">
    <location>
        <begin position="1"/>
        <end position="75"/>
    </location>
</feature>
<accession>P31280</accession>
<reference key="1">
    <citation type="journal article" date="1992" name="Biochim. Biophys. Acta">
        <title>Nucleotide sequence of the genome of the bacteriophage alpha 3: interrelationship of the genome structure and the gene products with those of the phages, phi X174, G4 and phi K.</title>
        <authorList>
            <person name="Kodaira K."/>
            <person name="Nakano K."/>
            <person name="Okada S."/>
            <person name="Taketo A."/>
        </authorList>
    </citation>
    <scope>NUCLEOTIDE SEQUENCE [GENOMIC DNA]</scope>
</reference>
<sequence>MERWTLLDILAFLLLLSLLLPSLLIMFIPSMYKQHASLWKARSLAKTLSMASSARLTPLSSSRTPCVLKQDSKKL</sequence>
<dbReference type="EMBL" id="X60322">
    <property type="protein sequence ID" value="CAA42879.1"/>
    <property type="molecule type" value="Genomic_DNA"/>
</dbReference>
<dbReference type="PIR" id="S22329">
    <property type="entry name" value="S22329"/>
</dbReference>
<dbReference type="RefSeq" id="NP_039595.1">
    <property type="nucleotide sequence ID" value="NC_001330.1"/>
</dbReference>
<dbReference type="SMR" id="P31280"/>
<dbReference type="GeneID" id="1260695"/>
<dbReference type="KEGG" id="vg:1260695"/>
<dbReference type="OrthoDB" id="28867at10239"/>
<dbReference type="Proteomes" id="UP000002137">
    <property type="component" value="Genome"/>
</dbReference>
<dbReference type="GO" id="GO:0004857">
    <property type="term" value="F:enzyme inhibitor activity"/>
    <property type="evidence" value="ECO:0007669"/>
    <property type="project" value="InterPro"/>
</dbReference>
<dbReference type="GO" id="GO:0031640">
    <property type="term" value="P:killing of cells of another organism"/>
    <property type="evidence" value="ECO:0007669"/>
    <property type="project" value="UniProtKB-KW"/>
</dbReference>
<dbReference type="InterPro" id="IPR007605">
    <property type="entry name" value="Micrvir_lysisE"/>
</dbReference>
<dbReference type="Pfam" id="PF04517">
    <property type="entry name" value="Microvir_lysis"/>
    <property type="match status" value="1"/>
</dbReference>
<keyword id="KW-0204">Cytolysis</keyword>
<keyword id="KW-0578">Host cell lysis by virus</keyword>
<keyword id="KW-1185">Reference proteome</keyword>
<keyword id="KW-1188">Viral release from host cell</keyword>
<comment type="function">
    <text>E protein is responsible for host cell lysis.</text>
</comment>
<gene>
    <name type="primary">E</name>
</gene>
<protein>
    <recommendedName>
        <fullName>Lysis protein</fullName>
        <shortName>E protein</shortName>
    </recommendedName>
    <alternativeName>
        <fullName>GPE</fullName>
    </alternativeName>
</protein>
<organism>
    <name type="scientific">Escherichia phage alpha3</name>
    <name type="common">Bacteriophage alpha-3</name>
    <dbReference type="NCBI Taxonomy" id="10849"/>
    <lineage>
        <taxon>Viruses</taxon>
        <taxon>Monodnaviria</taxon>
        <taxon>Sangervirae</taxon>
        <taxon>Phixviricota</taxon>
        <taxon>Malgrandaviricetes</taxon>
        <taxon>Petitvirales</taxon>
        <taxon>Microviridae</taxon>
        <taxon>Bullavirinae</taxon>
        <taxon>Alphatrevirus</taxon>
        <taxon>Alphatrevirus alpha3</taxon>
    </lineage>
</organism>
<proteinExistence type="predicted"/>